<protein>
    <recommendedName>
        <fullName>Putative uncharacterized protein UNQ5815/PRO19632</fullName>
    </recommendedName>
</protein>
<accession>Q6UWF5</accession>
<evidence type="ECO:0000255" key="1"/>
<evidence type="ECO:0000305" key="2"/>
<dbReference type="EMBL" id="AY358807">
    <property type="protein sequence ID" value="AAQ89167.1"/>
    <property type="molecule type" value="mRNA"/>
</dbReference>
<dbReference type="BioMuta" id="UNQ5815/PRO19632"/>
<dbReference type="neXtProt" id="NX_Q6UWF5"/>
<dbReference type="InParanoid" id="Q6UWF5"/>
<dbReference type="PAN-GO" id="Q6UWF5">
    <property type="GO annotations" value="0 GO annotations based on evolutionary models"/>
</dbReference>
<dbReference type="Pharos" id="Q6UWF5">
    <property type="development level" value="Tdark"/>
</dbReference>
<dbReference type="Proteomes" id="UP000005640">
    <property type="component" value="Unplaced"/>
</dbReference>
<dbReference type="RNAct" id="Q6UWF5">
    <property type="molecule type" value="protein"/>
</dbReference>
<dbReference type="GO" id="GO:0016020">
    <property type="term" value="C:membrane"/>
    <property type="evidence" value="ECO:0007669"/>
    <property type="project" value="UniProtKB-SubCell"/>
</dbReference>
<feature type="chain" id="PRO_0000317730" description="Putative uncharacterized protein UNQ5815/PRO19632">
    <location>
        <begin position="1"/>
        <end position="114"/>
    </location>
</feature>
<feature type="transmembrane region" description="Helical" evidence="1">
    <location>
        <begin position="14"/>
        <end position="34"/>
    </location>
</feature>
<feature type="transmembrane region" description="Helical" evidence="1">
    <location>
        <begin position="75"/>
        <end position="95"/>
    </location>
</feature>
<reference key="1">
    <citation type="journal article" date="2003" name="Genome Res.">
        <title>The secreted protein discovery initiative (SPDI), a large-scale effort to identify novel human secreted and transmembrane proteins: a bioinformatics assessment.</title>
        <authorList>
            <person name="Clark H.F."/>
            <person name="Gurney A.L."/>
            <person name="Abaya E."/>
            <person name="Baker K."/>
            <person name="Baldwin D.T."/>
            <person name="Brush J."/>
            <person name="Chen J."/>
            <person name="Chow B."/>
            <person name="Chui C."/>
            <person name="Crowley C."/>
            <person name="Currell B."/>
            <person name="Deuel B."/>
            <person name="Dowd P."/>
            <person name="Eaton D."/>
            <person name="Foster J.S."/>
            <person name="Grimaldi C."/>
            <person name="Gu Q."/>
            <person name="Hass P.E."/>
            <person name="Heldens S."/>
            <person name="Huang A."/>
            <person name="Kim H.S."/>
            <person name="Klimowski L."/>
            <person name="Jin Y."/>
            <person name="Johnson S."/>
            <person name="Lee J."/>
            <person name="Lewis L."/>
            <person name="Liao D."/>
            <person name="Mark M.R."/>
            <person name="Robbie E."/>
            <person name="Sanchez C."/>
            <person name="Schoenfeld J."/>
            <person name="Seshagiri S."/>
            <person name="Simmons L."/>
            <person name="Singh J."/>
            <person name="Smith V."/>
            <person name="Stinson J."/>
            <person name="Vagts A."/>
            <person name="Vandlen R.L."/>
            <person name="Watanabe C."/>
            <person name="Wieand D."/>
            <person name="Woods K."/>
            <person name="Xie M.-H."/>
            <person name="Yansura D.G."/>
            <person name="Yi S."/>
            <person name="Yu G."/>
            <person name="Yuan J."/>
            <person name="Zhang M."/>
            <person name="Zhang Z."/>
            <person name="Goddard A.D."/>
            <person name="Wood W.I."/>
            <person name="Godowski P.J."/>
            <person name="Gray A.M."/>
        </authorList>
    </citation>
    <scope>NUCLEOTIDE SEQUENCE [LARGE SCALE MRNA]</scope>
</reference>
<keyword id="KW-0472">Membrane</keyword>
<keyword id="KW-1185">Reference proteome</keyword>
<keyword id="KW-0812">Transmembrane</keyword>
<keyword id="KW-1133">Transmembrane helix</keyword>
<sequence>MQIQNNLFFCCYTVMSAIFKWLLLYSLPALCFLLGTQESESFHSKAEILVTLSQVIISPAGPHALTWTTHFSPSVIIILVPCWWHAVIVTQHPVANCYVTNHLNIQWLELKAGS</sequence>
<organism>
    <name type="scientific">Homo sapiens</name>
    <name type="common">Human</name>
    <dbReference type="NCBI Taxonomy" id="9606"/>
    <lineage>
        <taxon>Eukaryota</taxon>
        <taxon>Metazoa</taxon>
        <taxon>Chordata</taxon>
        <taxon>Craniata</taxon>
        <taxon>Vertebrata</taxon>
        <taxon>Euteleostomi</taxon>
        <taxon>Mammalia</taxon>
        <taxon>Eutheria</taxon>
        <taxon>Euarchontoglires</taxon>
        <taxon>Primates</taxon>
        <taxon>Haplorrhini</taxon>
        <taxon>Catarrhini</taxon>
        <taxon>Hominidae</taxon>
        <taxon>Homo</taxon>
    </lineage>
</organism>
<proteinExistence type="predicted"/>
<gene>
    <name type="ORF">UNQ5815/PRO19632</name>
</gene>
<name>YF002_HUMAN</name>
<comment type="subcellular location">
    <subcellularLocation>
        <location evidence="2">Membrane</location>
        <topology evidence="2">Multi-pass membrane protein</topology>
    </subcellularLocation>
</comment>